<keyword id="KW-0030">Aminoacyl-tRNA synthetase</keyword>
<keyword id="KW-0067">ATP-binding</keyword>
<keyword id="KW-0963">Cytoplasm</keyword>
<keyword id="KW-0436">Ligase</keyword>
<keyword id="KW-0547">Nucleotide-binding</keyword>
<keyword id="KW-0648">Protein biosynthesis</keyword>
<comment type="function">
    <text evidence="1">Catalyzes the attachment of glutamate to tRNA(Glu) in a two-step reaction: glutamate is first activated by ATP to form Glu-AMP and then transferred to the acceptor end of tRNA(Glu).</text>
</comment>
<comment type="catalytic activity">
    <reaction evidence="1">
        <text>tRNA(Glu) + L-glutamate + ATP = L-glutamyl-tRNA(Glu) + AMP + diphosphate</text>
        <dbReference type="Rhea" id="RHEA:23540"/>
        <dbReference type="Rhea" id="RHEA-COMP:9663"/>
        <dbReference type="Rhea" id="RHEA-COMP:9680"/>
        <dbReference type="ChEBI" id="CHEBI:29985"/>
        <dbReference type="ChEBI" id="CHEBI:30616"/>
        <dbReference type="ChEBI" id="CHEBI:33019"/>
        <dbReference type="ChEBI" id="CHEBI:78442"/>
        <dbReference type="ChEBI" id="CHEBI:78520"/>
        <dbReference type="ChEBI" id="CHEBI:456215"/>
        <dbReference type="EC" id="6.1.1.17"/>
    </reaction>
</comment>
<comment type="subunit">
    <text evidence="1">Monomer.</text>
</comment>
<comment type="subcellular location">
    <subcellularLocation>
        <location evidence="1">Cytoplasm</location>
    </subcellularLocation>
</comment>
<comment type="similarity">
    <text evidence="1">Belongs to the class-I aminoacyl-tRNA synthetase family. Glutamate--tRNA ligase type 1 subfamily.</text>
</comment>
<name>SYE_MYCGI</name>
<protein>
    <recommendedName>
        <fullName evidence="1">Glutamate--tRNA ligase</fullName>
        <ecNumber evidence="1">6.1.1.17</ecNumber>
    </recommendedName>
    <alternativeName>
        <fullName evidence="1">Glutamyl-tRNA synthetase</fullName>
        <shortName evidence="1">GluRS</shortName>
    </alternativeName>
</protein>
<dbReference type="EC" id="6.1.1.17" evidence="1"/>
<dbReference type="EMBL" id="CP000656">
    <property type="protein sequence ID" value="ABP46698.1"/>
    <property type="molecule type" value="Genomic_DNA"/>
</dbReference>
<dbReference type="SMR" id="A4TE16"/>
<dbReference type="STRING" id="350054.Mflv_4229"/>
<dbReference type="KEGG" id="mgi:Mflv_4229"/>
<dbReference type="eggNOG" id="COG0008">
    <property type="taxonomic scope" value="Bacteria"/>
</dbReference>
<dbReference type="HOGENOM" id="CLU_015768_6_1_11"/>
<dbReference type="OrthoDB" id="9807503at2"/>
<dbReference type="GO" id="GO:0005829">
    <property type="term" value="C:cytosol"/>
    <property type="evidence" value="ECO:0007669"/>
    <property type="project" value="TreeGrafter"/>
</dbReference>
<dbReference type="GO" id="GO:0005524">
    <property type="term" value="F:ATP binding"/>
    <property type="evidence" value="ECO:0007669"/>
    <property type="project" value="UniProtKB-UniRule"/>
</dbReference>
<dbReference type="GO" id="GO:0004818">
    <property type="term" value="F:glutamate-tRNA ligase activity"/>
    <property type="evidence" value="ECO:0007669"/>
    <property type="project" value="UniProtKB-UniRule"/>
</dbReference>
<dbReference type="GO" id="GO:0000049">
    <property type="term" value="F:tRNA binding"/>
    <property type="evidence" value="ECO:0007669"/>
    <property type="project" value="InterPro"/>
</dbReference>
<dbReference type="GO" id="GO:0008270">
    <property type="term" value="F:zinc ion binding"/>
    <property type="evidence" value="ECO:0007669"/>
    <property type="project" value="InterPro"/>
</dbReference>
<dbReference type="GO" id="GO:0006424">
    <property type="term" value="P:glutamyl-tRNA aminoacylation"/>
    <property type="evidence" value="ECO:0007669"/>
    <property type="project" value="UniProtKB-UniRule"/>
</dbReference>
<dbReference type="CDD" id="cd00808">
    <property type="entry name" value="GluRS_core"/>
    <property type="match status" value="1"/>
</dbReference>
<dbReference type="FunFam" id="3.40.50.620:FF:000149">
    <property type="entry name" value="Glutamate--tRNA ligase"/>
    <property type="match status" value="1"/>
</dbReference>
<dbReference type="Gene3D" id="1.10.10.350">
    <property type="match status" value="1"/>
</dbReference>
<dbReference type="Gene3D" id="1.10.8.70">
    <property type="entry name" value="Glutamate-tRNA synthetase, class I, anticodon-binding domain 1"/>
    <property type="match status" value="1"/>
</dbReference>
<dbReference type="Gene3D" id="1.10.1160.10">
    <property type="entry name" value="Glutamyl-trna Synthetase, Domain 2"/>
    <property type="match status" value="1"/>
</dbReference>
<dbReference type="Gene3D" id="3.90.800.10">
    <property type="entry name" value="Glutamyl-tRNA Synthetase, Domain 3"/>
    <property type="match status" value="1"/>
</dbReference>
<dbReference type="Gene3D" id="3.40.50.620">
    <property type="entry name" value="HUPs"/>
    <property type="match status" value="1"/>
</dbReference>
<dbReference type="HAMAP" id="MF_00022">
    <property type="entry name" value="Glu_tRNA_synth_type1"/>
    <property type="match status" value="1"/>
</dbReference>
<dbReference type="InterPro" id="IPR045462">
    <property type="entry name" value="aa-tRNA-synth_I_cd-bd"/>
</dbReference>
<dbReference type="InterPro" id="IPR020751">
    <property type="entry name" value="aa-tRNA-synth_I_codon-bd_sub2"/>
</dbReference>
<dbReference type="InterPro" id="IPR008925">
    <property type="entry name" value="aa_tRNA-synth_I_cd-bd_sf"/>
</dbReference>
<dbReference type="InterPro" id="IPR004527">
    <property type="entry name" value="Glu-tRNA-ligase_bac/mito"/>
</dbReference>
<dbReference type="InterPro" id="IPR020752">
    <property type="entry name" value="Glu-tRNA-synth_I_codon-bd_sub1"/>
</dbReference>
<dbReference type="InterPro" id="IPR000924">
    <property type="entry name" value="Glu/Gln-tRNA-synth"/>
</dbReference>
<dbReference type="InterPro" id="IPR020058">
    <property type="entry name" value="Glu/Gln-tRNA-synth_Ib_cat-dom"/>
</dbReference>
<dbReference type="InterPro" id="IPR020061">
    <property type="entry name" value="Glu_tRNA_lig_a-bdl"/>
</dbReference>
<dbReference type="InterPro" id="IPR049940">
    <property type="entry name" value="GluQ/Sye"/>
</dbReference>
<dbReference type="InterPro" id="IPR033910">
    <property type="entry name" value="GluRS_core"/>
</dbReference>
<dbReference type="InterPro" id="IPR014729">
    <property type="entry name" value="Rossmann-like_a/b/a_fold"/>
</dbReference>
<dbReference type="NCBIfam" id="TIGR00464">
    <property type="entry name" value="gltX_bact"/>
    <property type="match status" value="1"/>
</dbReference>
<dbReference type="PANTHER" id="PTHR43311">
    <property type="entry name" value="GLUTAMATE--TRNA LIGASE"/>
    <property type="match status" value="1"/>
</dbReference>
<dbReference type="PANTHER" id="PTHR43311:SF2">
    <property type="entry name" value="GLUTAMATE--TRNA LIGASE, MITOCHONDRIAL-RELATED"/>
    <property type="match status" value="1"/>
</dbReference>
<dbReference type="Pfam" id="PF19269">
    <property type="entry name" value="Anticodon_2"/>
    <property type="match status" value="1"/>
</dbReference>
<dbReference type="Pfam" id="PF00749">
    <property type="entry name" value="tRNA-synt_1c"/>
    <property type="match status" value="1"/>
</dbReference>
<dbReference type="PRINTS" id="PR00987">
    <property type="entry name" value="TRNASYNTHGLU"/>
</dbReference>
<dbReference type="SUPFAM" id="SSF48163">
    <property type="entry name" value="An anticodon-binding domain of class I aminoacyl-tRNA synthetases"/>
    <property type="match status" value="1"/>
</dbReference>
<dbReference type="SUPFAM" id="SSF52374">
    <property type="entry name" value="Nucleotidylyl transferase"/>
    <property type="match status" value="1"/>
</dbReference>
<sequence>MKVRVRFCPSPTGTPHVGLIRTALFNWAYARHTGGDFVFRIEDTDAQRDSEESYLALLDALRWLGMDWDEGPEVGGPYAPYRQSQRRDLYLDVIRRLLAAGEAYEAFSTAEEVEARHLAAGRNPKLGYDNFDRDLTEEQRAAFRAEGRQPVVRLRMPDADMTWVDLVRGETTFPVGSVPDFALTRGSGDPLYTLVNPVDDALMKITHVLRGEDLLPSTPRQLALYAALIRIGVTDMTPQFAHLPSVLGEGNKKLSKRDPQSNLFLHRERGFIPEGLLNYLALLGWSIADDRDIFSVQEMVAAFDVADVNSNPARFDQKKADALNAEHIRRLDEAEFVRRLADYFSTHGYDTGLDDARFAEAAALVQTRIVVLGDAWDLLKFLDESSFALDEKSAGKELKDTAVPVLTAALAALKGVGEWTTAQIEDALKVALIDGLELKPRKAFGPVRVAVTGSSISPPLFESLELLGRDRSLERLRAGRDHAAAAVTMDA</sequence>
<evidence type="ECO:0000255" key="1">
    <source>
        <dbReference type="HAMAP-Rule" id="MF_00022"/>
    </source>
</evidence>
<reference key="1">
    <citation type="submission" date="2007-04" db="EMBL/GenBank/DDBJ databases">
        <title>Complete sequence of chromosome of Mycobacterium gilvum PYR-GCK.</title>
        <authorList>
            <consortium name="US DOE Joint Genome Institute"/>
            <person name="Copeland A."/>
            <person name="Lucas S."/>
            <person name="Lapidus A."/>
            <person name="Barry K."/>
            <person name="Detter J.C."/>
            <person name="Glavina del Rio T."/>
            <person name="Hammon N."/>
            <person name="Israni S."/>
            <person name="Dalin E."/>
            <person name="Tice H."/>
            <person name="Pitluck S."/>
            <person name="Chain P."/>
            <person name="Malfatti S."/>
            <person name="Shin M."/>
            <person name="Vergez L."/>
            <person name="Schmutz J."/>
            <person name="Larimer F."/>
            <person name="Land M."/>
            <person name="Hauser L."/>
            <person name="Kyrpides N."/>
            <person name="Mikhailova N."/>
            <person name="Miller C."/>
            <person name="Richardson P."/>
        </authorList>
    </citation>
    <scope>NUCLEOTIDE SEQUENCE [LARGE SCALE GENOMIC DNA]</scope>
    <source>
        <strain>PYR-GCK</strain>
    </source>
</reference>
<proteinExistence type="inferred from homology"/>
<organism>
    <name type="scientific">Mycolicibacterium gilvum (strain PYR-GCK)</name>
    <name type="common">Mycobacterium gilvum (strain PYR-GCK)</name>
    <dbReference type="NCBI Taxonomy" id="350054"/>
    <lineage>
        <taxon>Bacteria</taxon>
        <taxon>Bacillati</taxon>
        <taxon>Actinomycetota</taxon>
        <taxon>Actinomycetes</taxon>
        <taxon>Mycobacteriales</taxon>
        <taxon>Mycobacteriaceae</taxon>
        <taxon>Mycolicibacterium</taxon>
    </lineage>
</organism>
<feature type="chain" id="PRO_0000330979" description="Glutamate--tRNA ligase">
    <location>
        <begin position="1"/>
        <end position="491"/>
    </location>
</feature>
<feature type="short sequence motif" description="'HIGH' region" evidence="1">
    <location>
        <begin position="9"/>
        <end position="19"/>
    </location>
</feature>
<feature type="short sequence motif" description="'KMSKS' region" evidence="1">
    <location>
        <begin position="253"/>
        <end position="257"/>
    </location>
</feature>
<feature type="binding site" evidence="1">
    <location>
        <position position="256"/>
    </location>
    <ligand>
        <name>ATP</name>
        <dbReference type="ChEBI" id="CHEBI:30616"/>
    </ligand>
</feature>
<gene>
    <name evidence="1" type="primary">gltX</name>
    <name type="ordered locus">Mflv_4229</name>
</gene>
<accession>A4TE16</accession>